<proteinExistence type="evidence at protein level"/>
<name>HIRA_MOUSE</name>
<keyword id="KW-0025">Alternative splicing</keyword>
<keyword id="KW-0156">Chromatin regulator</keyword>
<keyword id="KW-0539">Nucleus</keyword>
<keyword id="KW-0597">Phosphoprotein</keyword>
<keyword id="KW-1185">Reference proteome</keyword>
<keyword id="KW-0677">Repeat</keyword>
<keyword id="KW-0678">Repressor</keyword>
<keyword id="KW-0804">Transcription</keyword>
<keyword id="KW-0805">Transcription regulation</keyword>
<keyword id="KW-0832">Ubl conjugation</keyword>
<keyword id="KW-0853">WD repeat</keyword>
<comment type="function">
    <text evidence="1 6">Required for the periodic repression of histone gene transcription during the cell cycle (By similarity). Cooperates with ASF1A to promote replication-independent chromatin assembly. Required for the formation of senescence-associated heterochromatin foci (SAHF) and efficient senescence-associated cell cycle exit.</text>
</comment>
<comment type="subunit">
    <text evidence="2 8">Interacts with CCNA1, HIRIP3 and NFU1/HIRIP5 (By similarity). Part of a complex which includes ASF1A, CABIN1, histone H3.3, histone H4 and UBN1 (By similarity). Interacts with histone H2B, histone H3-3B, PAX3 and PAX7 (PubMed:9731536).</text>
</comment>
<comment type="subcellular location">
    <subcellularLocation>
        <location evidence="1">Nucleus</location>
    </subcellularLocation>
    <subcellularLocation>
        <location evidence="1">Nucleus</location>
        <location evidence="1">PML body</location>
    </subcellularLocation>
    <text evidence="1 5 8">Primarily, though not exclusively, localized to the nucleus (By similarity). Localizes to PML bodies immediately prior to onset of senescence (By similarity). Localizes specifically to the male nucleus in fertilized eggs. This localization persists from the initiation of sperm nucleus decondensation to pronucleus formation.</text>
</comment>
<comment type="alternative products">
    <event type="alternative splicing"/>
    <isoform>
        <id>Q61666-1</id>
        <name>Long</name>
        <sequence type="displayed"/>
    </isoform>
    <isoform>
        <id>Q61666-2</id>
        <name>Short</name>
        <sequence type="described" ref="VSP_006773 VSP_006774"/>
    </isoform>
    <isoform>
        <id>Q61666-3</id>
        <name>3</name>
        <sequence type="described" ref="VSP_025050 VSP_025051 VSP_025052"/>
    </isoform>
    <isoform>
        <id>Q61666-4</id>
        <name>4</name>
        <sequence type="described" ref="VSP_025049"/>
    </isoform>
</comment>
<comment type="tissue specificity">
    <text>Expressed in cerebrum, cerebellum, heart, kidney, liver, lung and spleen.</text>
</comment>
<comment type="developmental stage">
    <text evidence="7 8">Throughout development the long isoform is more abundant. In embryos, ubiquitously expressed with high levels detected in cranial neural folds, subregions of pharyngeal arches 1 and 2, circumpharyngeal neural crest and limb buds.</text>
</comment>
<comment type="PTM">
    <text evidence="1">Sumoylated.</text>
</comment>
<comment type="PTM">
    <text evidence="1 4">Phosphorylated by CDK2/CCNA1 and CDK2/CCNE1 on Thr-554 in vitro (By similarity). Also phosphorylated on Thr-554 in vivo.</text>
</comment>
<comment type="disruption phenotype">
    <text evidence="6">Embryonic stem cells (ES cells) exhibit accelerated differentiation in the early stages which may be attributable to increased availability of soluble histones.</text>
</comment>
<comment type="similarity">
    <text evidence="12">Belongs to the WD repeat HIR1 family.</text>
</comment>
<gene>
    <name type="primary">Hira</name>
    <name type="synonym">Tuple1</name>
</gene>
<dbReference type="EMBL" id="X92590">
    <property type="protein sequence ID" value="CAA63334.1"/>
    <property type="molecule type" value="mRNA"/>
</dbReference>
<dbReference type="EMBL" id="X99712">
    <property type="protein sequence ID" value="CAA68049.1"/>
    <property type="molecule type" value="mRNA"/>
</dbReference>
<dbReference type="EMBL" id="X75295">
    <property type="protein sequence ID" value="CAA53043.1"/>
    <property type="molecule type" value="mRNA"/>
</dbReference>
<dbReference type="EMBL" id="AK135928">
    <property type="protein sequence ID" value="BAE22728.1"/>
    <property type="molecule type" value="mRNA"/>
</dbReference>
<dbReference type="EMBL" id="AK168963">
    <property type="protein sequence ID" value="BAE40768.1"/>
    <property type="molecule type" value="mRNA"/>
</dbReference>
<dbReference type="EMBL" id="BC052856">
    <property type="protein sequence ID" value="AAH52856.1"/>
    <property type="molecule type" value="mRNA"/>
</dbReference>
<dbReference type="CCDS" id="CCDS28031.1">
    <molecule id="Q61666-1"/>
</dbReference>
<dbReference type="PIR" id="S45345">
    <property type="entry name" value="S45345"/>
</dbReference>
<dbReference type="PIR" id="S68141">
    <property type="entry name" value="S68141"/>
</dbReference>
<dbReference type="RefSeq" id="NP_034565.2">
    <molecule id="Q61666-1"/>
    <property type="nucleotide sequence ID" value="NM_010435.2"/>
</dbReference>
<dbReference type="SMR" id="Q61666"/>
<dbReference type="BioGRID" id="200309">
    <property type="interactions" value="17"/>
</dbReference>
<dbReference type="FunCoup" id="Q61666">
    <property type="interactions" value="2775"/>
</dbReference>
<dbReference type="IntAct" id="Q61666">
    <property type="interactions" value="9"/>
</dbReference>
<dbReference type="MINT" id="Q61666"/>
<dbReference type="STRING" id="10090.ENSMUSP00000004222"/>
<dbReference type="GlyGen" id="Q61666">
    <property type="glycosylation" value="1 site"/>
</dbReference>
<dbReference type="iPTMnet" id="Q61666"/>
<dbReference type="PhosphoSitePlus" id="Q61666"/>
<dbReference type="jPOST" id="Q61666"/>
<dbReference type="PaxDb" id="10090-ENSMUSP00000004222"/>
<dbReference type="PeptideAtlas" id="Q61666"/>
<dbReference type="ProteomicsDB" id="269756">
    <molecule id="Q61666-1"/>
</dbReference>
<dbReference type="ProteomicsDB" id="269757">
    <molecule id="Q61666-2"/>
</dbReference>
<dbReference type="ProteomicsDB" id="269758">
    <molecule id="Q61666-3"/>
</dbReference>
<dbReference type="ProteomicsDB" id="269759">
    <molecule id="Q61666-4"/>
</dbReference>
<dbReference type="Pumba" id="Q61666"/>
<dbReference type="Antibodypedia" id="34961">
    <property type="antibodies" value="274 antibodies from 30 providers"/>
</dbReference>
<dbReference type="DNASU" id="15260"/>
<dbReference type="Ensembl" id="ENSMUST00000004222.14">
    <molecule id="Q61666-1"/>
    <property type="protein sequence ID" value="ENSMUSP00000004222.8"/>
    <property type="gene ID" value="ENSMUSG00000022702.17"/>
</dbReference>
<dbReference type="Ensembl" id="ENSMUST00000120532.9">
    <molecule id="Q61666-3"/>
    <property type="protein sequence ID" value="ENSMUSP00000112614.2"/>
    <property type="gene ID" value="ENSMUSG00000022702.17"/>
</dbReference>
<dbReference type="GeneID" id="15260"/>
<dbReference type="KEGG" id="mmu:15260"/>
<dbReference type="UCSC" id="uc007yoq.1">
    <molecule id="Q61666-1"/>
    <property type="organism name" value="mouse"/>
</dbReference>
<dbReference type="UCSC" id="uc007yor.1">
    <molecule id="Q61666-3"/>
    <property type="organism name" value="mouse"/>
</dbReference>
<dbReference type="AGR" id="MGI:99430"/>
<dbReference type="CTD" id="7290"/>
<dbReference type="MGI" id="MGI:99430">
    <property type="gene designation" value="Hira"/>
</dbReference>
<dbReference type="VEuPathDB" id="HostDB:ENSMUSG00000022702"/>
<dbReference type="eggNOG" id="KOG0973">
    <property type="taxonomic scope" value="Eukaryota"/>
</dbReference>
<dbReference type="GeneTree" id="ENSGT00550000074919"/>
<dbReference type="HOGENOM" id="CLU_604037_0_0_1"/>
<dbReference type="InParanoid" id="Q61666"/>
<dbReference type="OMA" id="RGSWDGD"/>
<dbReference type="OrthoDB" id="1741719at2759"/>
<dbReference type="PhylomeDB" id="Q61666"/>
<dbReference type="TreeFam" id="TF323161"/>
<dbReference type="Reactome" id="R-MMU-2559584">
    <property type="pathway name" value="Formation of Senescence-Associated Heterochromatin Foci (SAHF)"/>
</dbReference>
<dbReference type="BioGRID-ORCS" id="15260">
    <property type="hits" value="32 hits in 84 CRISPR screens"/>
</dbReference>
<dbReference type="ChiTaRS" id="Hira">
    <property type="organism name" value="mouse"/>
</dbReference>
<dbReference type="PRO" id="PR:Q61666"/>
<dbReference type="Proteomes" id="UP000000589">
    <property type="component" value="Chromosome 16"/>
</dbReference>
<dbReference type="RNAct" id="Q61666">
    <property type="molecule type" value="protein"/>
</dbReference>
<dbReference type="Bgee" id="ENSMUSG00000022702">
    <property type="expression patterns" value="Expressed in ventricular zone and 190 other cell types or tissues"/>
</dbReference>
<dbReference type="ExpressionAtlas" id="Q61666">
    <property type="expression patterns" value="baseline and differential"/>
</dbReference>
<dbReference type="GO" id="GO:0000785">
    <property type="term" value="C:chromatin"/>
    <property type="evidence" value="ECO:0000314"/>
    <property type="project" value="MGI"/>
</dbReference>
<dbReference type="GO" id="GO:0005654">
    <property type="term" value="C:nucleoplasm"/>
    <property type="evidence" value="ECO:0000304"/>
    <property type="project" value="Reactome"/>
</dbReference>
<dbReference type="GO" id="GO:0016605">
    <property type="term" value="C:PML body"/>
    <property type="evidence" value="ECO:0007669"/>
    <property type="project" value="UniProtKB-SubCell"/>
</dbReference>
<dbReference type="GO" id="GO:0032991">
    <property type="term" value="C:protein-containing complex"/>
    <property type="evidence" value="ECO:0007669"/>
    <property type="project" value="Ensembl"/>
</dbReference>
<dbReference type="GO" id="GO:0042393">
    <property type="term" value="F:histone binding"/>
    <property type="evidence" value="ECO:0007669"/>
    <property type="project" value="Ensembl"/>
</dbReference>
<dbReference type="GO" id="GO:0140713">
    <property type="term" value="F:histone chaperone activity"/>
    <property type="evidence" value="ECO:0000304"/>
    <property type="project" value="Reactome"/>
</dbReference>
<dbReference type="GO" id="GO:0061629">
    <property type="term" value="F:RNA polymerase II-specific DNA-binding transcription factor binding"/>
    <property type="evidence" value="ECO:0007669"/>
    <property type="project" value="Ensembl"/>
</dbReference>
<dbReference type="GO" id="GO:0006351">
    <property type="term" value="P:DNA-templated transcription"/>
    <property type="evidence" value="ECO:0007669"/>
    <property type="project" value="InterPro"/>
</dbReference>
<dbReference type="GO" id="GO:0007369">
    <property type="term" value="P:gastrulation"/>
    <property type="evidence" value="ECO:0000315"/>
    <property type="project" value="MGI"/>
</dbReference>
<dbReference type="GO" id="GO:0042692">
    <property type="term" value="P:muscle cell differentiation"/>
    <property type="evidence" value="ECO:0000316"/>
    <property type="project" value="MGI"/>
</dbReference>
<dbReference type="GO" id="GO:0006334">
    <property type="term" value="P:nucleosome assembly"/>
    <property type="evidence" value="ECO:0007669"/>
    <property type="project" value="Ensembl"/>
</dbReference>
<dbReference type="GO" id="GO:0001649">
    <property type="term" value="P:osteoblast differentiation"/>
    <property type="evidence" value="ECO:0000316"/>
    <property type="project" value="MGI"/>
</dbReference>
<dbReference type="GO" id="GO:0006355">
    <property type="term" value="P:regulation of DNA-templated transcription"/>
    <property type="evidence" value="ECO:0007669"/>
    <property type="project" value="InterPro"/>
</dbReference>
<dbReference type="CDD" id="cd00200">
    <property type="entry name" value="WD40"/>
    <property type="match status" value="1"/>
</dbReference>
<dbReference type="FunFam" id="2.130.10.10:FF:000075">
    <property type="entry name" value="Protein HIRA"/>
    <property type="match status" value="1"/>
</dbReference>
<dbReference type="FunFam" id="2.130.10.10:FF:000105">
    <property type="entry name" value="Protein HIRA"/>
    <property type="match status" value="1"/>
</dbReference>
<dbReference type="Gene3D" id="2.130.10.10">
    <property type="entry name" value="YVTN repeat-like/Quinoprotein amine dehydrogenase"/>
    <property type="match status" value="2"/>
</dbReference>
<dbReference type="InterPro" id="IPR055410">
    <property type="entry name" value="CAF1B_HIR1_beta-prop"/>
</dbReference>
<dbReference type="InterPro" id="IPR031120">
    <property type="entry name" value="HIR1-like"/>
</dbReference>
<dbReference type="InterPro" id="IPR011494">
    <property type="entry name" value="HIRA-like_C"/>
</dbReference>
<dbReference type="InterPro" id="IPR015943">
    <property type="entry name" value="WD40/YVTN_repeat-like_dom_sf"/>
</dbReference>
<dbReference type="InterPro" id="IPR036322">
    <property type="entry name" value="WD40_repeat_dom_sf"/>
</dbReference>
<dbReference type="InterPro" id="IPR001680">
    <property type="entry name" value="WD40_rpt"/>
</dbReference>
<dbReference type="PANTHER" id="PTHR13831">
    <property type="entry name" value="MEMBER OF THE HIR1 FAMILY OF WD-REPEAT PROTEINS"/>
    <property type="match status" value="1"/>
</dbReference>
<dbReference type="PANTHER" id="PTHR13831:SF0">
    <property type="entry name" value="PROTEIN HIRA"/>
    <property type="match status" value="1"/>
</dbReference>
<dbReference type="Pfam" id="PF24105">
    <property type="entry name" value="Beta-prop_CAF1B_HIR1"/>
    <property type="match status" value="1"/>
</dbReference>
<dbReference type="Pfam" id="PF07569">
    <property type="entry name" value="Hira"/>
    <property type="match status" value="1"/>
</dbReference>
<dbReference type="SMART" id="SM00320">
    <property type="entry name" value="WD40"/>
    <property type="match status" value="7"/>
</dbReference>
<dbReference type="SUPFAM" id="SSF50978">
    <property type="entry name" value="WD40 repeat-like"/>
    <property type="match status" value="1"/>
</dbReference>
<dbReference type="PROSITE" id="PS00678">
    <property type="entry name" value="WD_REPEATS_1"/>
    <property type="match status" value="1"/>
</dbReference>
<dbReference type="PROSITE" id="PS50082">
    <property type="entry name" value="WD_REPEATS_2"/>
    <property type="match status" value="3"/>
</dbReference>
<dbReference type="PROSITE" id="PS50294">
    <property type="entry name" value="WD_REPEATS_REGION"/>
    <property type="match status" value="1"/>
</dbReference>
<reference key="1">
    <citation type="journal article" date="1996" name="Biochim. Biophys. Acta">
        <title>The HIR protein family: isolation and characterization of a complete murine cDNA.</title>
        <authorList>
            <person name="Scamps C."/>
            <person name="Lorain S."/>
            <person name="Lamour V."/>
            <person name="Lipinski M."/>
        </authorList>
    </citation>
    <scope>NUCLEOTIDE SEQUENCE [MRNA] (ISOFORM LONG)</scope>
    <source>
        <strain>DBA/2J</strain>
    </source>
</reference>
<reference key="2">
    <citation type="journal article" date="1997" name="Hum. Mol. Genet.">
        <title>The murine homologue of HIRA, a DiGeorge syndrome candidate gene, is expressed in embryonic structures affected in human CATCH22 patients.</title>
        <authorList>
            <person name="Wilming L.G."/>
            <person name="Snoeren C.A.S."/>
            <person name="van Rijswijk A."/>
            <person name="Grosveld F."/>
            <person name="Meijers C."/>
        </authorList>
    </citation>
    <scope>NUCLEOTIDE SEQUENCE [MRNA] (ISOFORM LONG)</scope>
    <scope>DEVELOPMENTAL STAGE</scope>
    <source>
        <strain>ICR X Swiss Webster</strain>
        <tissue>Embryo</tissue>
    </source>
</reference>
<reference key="3">
    <citation type="journal article" date="1993" name="Hum. Mol. Genet.">
        <title>Isolation of a putative transcriptional regulator from the region of 22q11 deleted in DiGeorge syndrome, Shprintzen syndrome and familial congenital heart disease.</title>
        <authorList>
            <person name="Halford S."/>
            <person name="Wadey R."/>
            <person name="Roberts C."/>
            <person name="Daw S.C.M."/>
            <person name="Whiting J.A."/>
            <person name="O'Donnell H."/>
            <person name="Dunham I."/>
            <person name="Bentley D."/>
            <person name="Lindsay E."/>
            <person name="Baldini A."/>
            <person name="Francis F."/>
            <person name="Lehrach H."/>
            <person name="Williamson R."/>
            <person name="Wilson D.I."/>
            <person name="Goodship J."/>
            <person name="Cross I."/>
            <person name="Burn J."/>
            <person name="Scambler P.J."/>
        </authorList>
    </citation>
    <scope>NUCLEOTIDE SEQUENCE [MRNA] OF 45-562 (ISOFORM SHORT)</scope>
    <source>
        <strain>BALB/cJ</strain>
        <strain>C57BL/6J</strain>
        <tissue>Embryo</tissue>
        <tissue>Kidney</tissue>
    </source>
</reference>
<reference key="4">
    <citation type="journal article" date="2005" name="Science">
        <title>The transcriptional landscape of the mammalian genome.</title>
        <authorList>
            <person name="Carninci P."/>
            <person name="Kasukawa T."/>
            <person name="Katayama S."/>
            <person name="Gough J."/>
            <person name="Frith M.C."/>
            <person name="Maeda N."/>
            <person name="Oyama R."/>
            <person name="Ravasi T."/>
            <person name="Lenhard B."/>
            <person name="Wells C."/>
            <person name="Kodzius R."/>
            <person name="Shimokawa K."/>
            <person name="Bajic V.B."/>
            <person name="Brenner S.E."/>
            <person name="Batalov S."/>
            <person name="Forrest A.R."/>
            <person name="Zavolan M."/>
            <person name="Davis M.J."/>
            <person name="Wilming L.G."/>
            <person name="Aidinis V."/>
            <person name="Allen J.E."/>
            <person name="Ambesi-Impiombato A."/>
            <person name="Apweiler R."/>
            <person name="Aturaliya R.N."/>
            <person name="Bailey T.L."/>
            <person name="Bansal M."/>
            <person name="Baxter L."/>
            <person name="Beisel K.W."/>
            <person name="Bersano T."/>
            <person name="Bono H."/>
            <person name="Chalk A.M."/>
            <person name="Chiu K.P."/>
            <person name="Choudhary V."/>
            <person name="Christoffels A."/>
            <person name="Clutterbuck D.R."/>
            <person name="Crowe M.L."/>
            <person name="Dalla E."/>
            <person name="Dalrymple B.P."/>
            <person name="de Bono B."/>
            <person name="Della Gatta G."/>
            <person name="di Bernardo D."/>
            <person name="Down T."/>
            <person name="Engstrom P."/>
            <person name="Fagiolini M."/>
            <person name="Faulkner G."/>
            <person name="Fletcher C.F."/>
            <person name="Fukushima T."/>
            <person name="Furuno M."/>
            <person name="Futaki S."/>
            <person name="Gariboldi M."/>
            <person name="Georgii-Hemming P."/>
            <person name="Gingeras T.R."/>
            <person name="Gojobori T."/>
            <person name="Green R.E."/>
            <person name="Gustincich S."/>
            <person name="Harbers M."/>
            <person name="Hayashi Y."/>
            <person name="Hensch T.K."/>
            <person name="Hirokawa N."/>
            <person name="Hill D."/>
            <person name="Huminiecki L."/>
            <person name="Iacono M."/>
            <person name="Ikeo K."/>
            <person name="Iwama A."/>
            <person name="Ishikawa T."/>
            <person name="Jakt M."/>
            <person name="Kanapin A."/>
            <person name="Katoh M."/>
            <person name="Kawasawa Y."/>
            <person name="Kelso J."/>
            <person name="Kitamura H."/>
            <person name="Kitano H."/>
            <person name="Kollias G."/>
            <person name="Krishnan S.P."/>
            <person name="Kruger A."/>
            <person name="Kummerfeld S.K."/>
            <person name="Kurochkin I.V."/>
            <person name="Lareau L.F."/>
            <person name="Lazarevic D."/>
            <person name="Lipovich L."/>
            <person name="Liu J."/>
            <person name="Liuni S."/>
            <person name="McWilliam S."/>
            <person name="Madan Babu M."/>
            <person name="Madera M."/>
            <person name="Marchionni L."/>
            <person name="Matsuda H."/>
            <person name="Matsuzawa S."/>
            <person name="Miki H."/>
            <person name="Mignone F."/>
            <person name="Miyake S."/>
            <person name="Morris K."/>
            <person name="Mottagui-Tabar S."/>
            <person name="Mulder N."/>
            <person name="Nakano N."/>
            <person name="Nakauchi H."/>
            <person name="Ng P."/>
            <person name="Nilsson R."/>
            <person name="Nishiguchi S."/>
            <person name="Nishikawa S."/>
            <person name="Nori F."/>
            <person name="Ohara O."/>
            <person name="Okazaki Y."/>
            <person name="Orlando V."/>
            <person name="Pang K.C."/>
            <person name="Pavan W.J."/>
            <person name="Pavesi G."/>
            <person name="Pesole G."/>
            <person name="Petrovsky N."/>
            <person name="Piazza S."/>
            <person name="Reed J."/>
            <person name="Reid J.F."/>
            <person name="Ring B.Z."/>
            <person name="Ringwald M."/>
            <person name="Rost B."/>
            <person name="Ruan Y."/>
            <person name="Salzberg S.L."/>
            <person name="Sandelin A."/>
            <person name="Schneider C."/>
            <person name="Schoenbach C."/>
            <person name="Sekiguchi K."/>
            <person name="Semple C.A."/>
            <person name="Seno S."/>
            <person name="Sessa L."/>
            <person name="Sheng Y."/>
            <person name="Shibata Y."/>
            <person name="Shimada H."/>
            <person name="Shimada K."/>
            <person name="Silva D."/>
            <person name="Sinclair B."/>
            <person name="Sperling S."/>
            <person name="Stupka E."/>
            <person name="Sugiura K."/>
            <person name="Sultana R."/>
            <person name="Takenaka Y."/>
            <person name="Taki K."/>
            <person name="Tammoja K."/>
            <person name="Tan S.L."/>
            <person name="Tang S."/>
            <person name="Taylor M.S."/>
            <person name="Tegner J."/>
            <person name="Teichmann S.A."/>
            <person name="Ueda H.R."/>
            <person name="van Nimwegen E."/>
            <person name="Verardo R."/>
            <person name="Wei C.L."/>
            <person name="Yagi K."/>
            <person name="Yamanishi H."/>
            <person name="Zabarovsky E."/>
            <person name="Zhu S."/>
            <person name="Zimmer A."/>
            <person name="Hide W."/>
            <person name="Bult C."/>
            <person name="Grimmond S.M."/>
            <person name="Teasdale R.D."/>
            <person name="Liu E.T."/>
            <person name="Brusic V."/>
            <person name="Quackenbush J."/>
            <person name="Wahlestedt C."/>
            <person name="Mattick J.S."/>
            <person name="Hume D.A."/>
            <person name="Kai C."/>
            <person name="Sasaki D."/>
            <person name="Tomaru Y."/>
            <person name="Fukuda S."/>
            <person name="Kanamori-Katayama M."/>
            <person name="Suzuki M."/>
            <person name="Aoki J."/>
            <person name="Arakawa T."/>
            <person name="Iida J."/>
            <person name="Imamura K."/>
            <person name="Itoh M."/>
            <person name="Kato T."/>
            <person name="Kawaji H."/>
            <person name="Kawagashira N."/>
            <person name="Kawashima T."/>
            <person name="Kojima M."/>
            <person name="Kondo S."/>
            <person name="Konno H."/>
            <person name="Nakano K."/>
            <person name="Ninomiya N."/>
            <person name="Nishio T."/>
            <person name="Okada M."/>
            <person name="Plessy C."/>
            <person name="Shibata K."/>
            <person name="Shiraki T."/>
            <person name="Suzuki S."/>
            <person name="Tagami M."/>
            <person name="Waki K."/>
            <person name="Watahiki A."/>
            <person name="Okamura-Oho Y."/>
            <person name="Suzuki H."/>
            <person name="Kawai J."/>
            <person name="Hayashizaki Y."/>
        </authorList>
    </citation>
    <scope>NUCLEOTIDE SEQUENCE [LARGE SCALE MRNA] (ISOFORM 4)</scope>
    <scope>NUCLEOTIDE SEQUENCE [LARGE SCALE MRNA] OF 748-1015 (ISOFORMS LONG/4)</scope>
    <source>
        <strain>C57BL/6J</strain>
        <tissue>Egg</tissue>
    </source>
</reference>
<reference key="5">
    <citation type="journal article" date="2004" name="Genome Res.">
        <title>The status, quality, and expansion of the NIH full-length cDNA project: the Mammalian Gene Collection (MGC).</title>
        <authorList>
            <consortium name="The MGC Project Team"/>
        </authorList>
    </citation>
    <scope>NUCLEOTIDE SEQUENCE [LARGE SCALE MRNA] (ISOFORM 3)</scope>
    <source>
        <strain>C3H/He</strain>
        <tissue>Mesenchymal stem cell</tissue>
    </source>
</reference>
<reference key="6">
    <citation type="journal article" date="1998" name="Nat. Genet.">
        <title>HIRA, a mammalian homologue of Saccharomyces cerevisiae transcriptional co-repressors, interacts with Pax3.</title>
        <authorList>
            <person name="Magnaghi P."/>
            <person name="Roberts C."/>
            <person name="Lorain S."/>
            <person name="Lipinski M."/>
            <person name="Scambler P.J."/>
        </authorList>
    </citation>
    <scope>INTERACTION WITH HISTONE H2B; HISTONE H3-3B; PAX3 AND PAX7</scope>
    <scope>SUBCELLULAR LOCATION</scope>
    <scope>DEVELOPMENTAL STAGE</scope>
</reference>
<reference key="7">
    <citation type="journal article" date="2001" name="Mol. Cell. Biol.">
        <title>HIRA, the human homologue of yeast Hir1p and Hir2p, is a novel cyclin-cdk2 substrate whose expression blocks S-phase progression.</title>
        <authorList>
            <person name="Hall C."/>
            <person name="Nelson D.M."/>
            <person name="Ye X."/>
            <person name="Baker K."/>
            <person name="DeCaprio J.A."/>
            <person name="Seeholzer S."/>
            <person name="Lipinski M."/>
            <person name="Adams P.D."/>
        </authorList>
    </citation>
    <scope>PHOSPHORYLATION AT THR-554</scope>
</reference>
<reference key="8">
    <citation type="journal article" date="2005" name="Mech. Dev.">
        <title>Asymmetry in histone H3 variants and lysine methylation between paternal and maternal chromatin of the early mouse zygote.</title>
        <authorList>
            <person name="van der Heijden G.W."/>
            <person name="Dieker J.W."/>
            <person name="Derijck A.A.H.A."/>
            <person name="Muller S."/>
            <person name="Berden J.H.M."/>
            <person name="Braat D.D.M."/>
            <person name="van der Vlag J."/>
            <person name="de Boer P."/>
        </authorList>
    </citation>
    <scope>SUBCELLULAR LOCATION</scope>
</reference>
<reference key="9">
    <citation type="journal article" date="2006" name="Dev. Cell">
        <title>Hyperdynamic plasticity of chromatin proteins in pluripotent embryonic stem cells.</title>
        <authorList>
            <person name="Meshorer E."/>
            <person name="Yellajoshula D."/>
            <person name="George E."/>
            <person name="Scambler P.J."/>
            <person name="Brown D.T."/>
            <person name="Misteli T."/>
        </authorList>
    </citation>
    <scope>FUNCTION</scope>
    <scope>DISRUPTION PHENOTYPE</scope>
</reference>
<sequence>MKLLKPTWVNHNGKPIFSVDIHPDGTKFATGGQGQDSGKVVIWNMSPVLQEDDEKDENIPKMLCQMDNHLACVNCVRWSNSGMYLASGGDDKLIMVWKRATYIGPSTVFGSSGKLANVEQWRCVSILRSHSGDVMDVAWSPHDAWLASCSVDNTVVIWNAVKFPEILATLRGHSGLVKGLTWDPVGKYIASQADDRSLKVWRTLDWQLETSITKPFDECGGTTHVLRLSWSPDGHYLVSAHAMNNSGPTAQIIEREGWKTNMDFVGHRKAVTVVKFNPKIFKKKQKNGSSTKPSCPYCCCAVGSKDRSLSVWLTCLKRPLVVIHELFDKSIMDISWTLNGLGILVCSMDGSVAFLDFSQDELGDPLSEEEKSRIHQSTYGKSLAIMTEAQLSTAVIENPEMLKYQRRQQQQQLDQKNATTRETSSASSVTGVVNGESLEDIRKNLLKKQVETRTADGRRRITPLCIAQLDTGDFSTAFFNSIPLSSSLAGTMLSSPSGQQLLPLDSSTPSFGASKPCTEPVAATSARPTGESVSKDSMNATSTPAASSPSVLTTPSKIEPMKAFDSRFTERSKATPGAPSLTSVIPTAVERLKEQNLVKELRSRELESSSDSDEKVHLAKPSSLSKRKLELEVETVEKKKKGRPRKDSRLLPMSLSVQSPAALSTEKEAMCLSAPALALKLPIPGPQRAFTLQVSSDPSMYIEVENEVTTVGGIRLSRLKCNREGKEWETVLSSRVLTAAGSCDVVCVACEKRMLSVFSTCGRRLLPPILLPSPISTLHCTGPYVMALTAAATLSVWDVHRQVVVVKEESLHSILSGSDMTVSQILLTQHGIPVMNLSDGKAYCFNPSLSTWNLVSDKQDSLAQCADFRNSLPSQDAMLCSGPLAIIQGRTSNSGRQAARLFSVPHVVQQETTLAYLENQVAAALTLQSSHEYRHWLLLYARYLVNEGFEYRLREICKDLLGPVHCSTGSQWESTVVGLRKRELLKELLPVIGQNLRFQRLFTECQEQLDILRDK</sequence>
<accession>Q61666</accession>
<accession>O08845</accession>
<accession>Q3TFY0</accession>
<accession>Q3UX35</accession>
<accession>Q62365</accession>
<accession>Q7TMW4</accession>
<evidence type="ECO:0000250" key="1"/>
<evidence type="ECO:0000250" key="2">
    <source>
        <dbReference type="UniProtKB" id="P54198"/>
    </source>
</evidence>
<evidence type="ECO:0000256" key="3">
    <source>
        <dbReference type="SAM" id="MobiDB-lite"/>
    </source>
</evidence>
<evidence type="ECO:0000269" key="4">
    <source>
    </source>
</evidence>
<evidence type="ECO:0000269" key="5">
    <source>
    </source>
</evidence>
<evidence type="ECO:0000269" key="6">
    <source>
    </source>
</evidence>
<evidence type="ECO:0000269" key="7">
    <source>
    </source>
</evidence>
<evidence type="ECO:0000269" key="8">
    <source>
    </source>
</evidence>
<evidence type="ECO:0000303" key="9">
    <source>
    </source>
</evidence>
<evidence type="ECO:0000303" key="10">
    <source>
    </source>
</evidence>
<evidence type="ECO:0000303" key="11">
    <source>
    </source>
</evidence>
<evidence type="ECO:0000305" key="12"/>
<feature type="chain" id="PRO_0000051020" description="Protein HIRA">
    <location>
        <begin position="1"/>
        <end position="1015"/>
    </location>
</feature>
<feature type="repeat" description="WD 1">
    <location>
        <begin position="11"/>
        <end position="53"/>
    </location>
</feature>
<feature type="repeat" description="WD 2">
    <location>
        <begin position="68"/>
        <end position="107"/>
    </location>
</feature>
<feature type="repeat" description="WD 3">
    <location>
        <begin position="129"/>
        <end position="168"/>
    </location>
</feature>
<feature type="repeat" description="WD 4">
    <location>
        <begin position="172"/>
        <end position="211"/>
    </location>
</feature>
<feature type="repeat" description="WD 5">
    <location>
        <begin position="220"/>
        <end position="263"/>
    </location>
</feature>
<feature type="repeat" description="WD 6">
    <location>
        <begin position="266"/>
        <end position="322"/>
    </location>
</feature>
<feature type="repeat" description="WD 7">
    <location>
        <begin position="326"/>
        <end position="367"/>
    </location>
</feature>
<feature type="region of interest" description="Disordered" evidence="3">
    <location>
        <begin position="408"/>
        <end position="431"/>
    </location>
</feature>
<feature type="region of interest" description="Interaction with CCNA1" evidence="1">
    <location>
        <begin position="421"/>
        <end position="727"/>
    </location>
</feature>
<feature type="region of interest" description="Interaction with ASF1A" evidence="1">
    <location>
        <begin position="421"/>
        <end position="479"/>
    </location>
</feature>
<feature type="region of interest" description="Required for repression of histone gene transcription" evidence="1">
    <location>
        <begin position="439"/>
        <end position="475"/>
    </location>
</feature>
<feature type="region of interest" description="Disordered" evidence="3">
    <location>
        <begin position="494"/>
        <end position="558"/>
    </location>
</feature>
<feature type="region of interest" description="Interaction with PAX3" evidence="8">
    <location>
        <begin position="593"/>
        <end position="737"/>
    </location>
</feature>
<feature type="region of interest" description="Interaction with histone H2B" evidence="1">
    <location>
        <begin position="594"/>
        <end position="824"/>
    </location>
</feature>
<feature type="region of interest" description="Disordered" evidence="3">
    <location>
        <begin position="603"/>
        <end position="623"/>
    </location>
</feature>
<feature type="region of interest" description="Interaction with histone H4" evidence="1">
    <location>
        <begin position="736"/>
        <end position="1015"/>
    </location>
</feature>
<feature type="region of interest" description="Interaction with PAX3" evidence="8">
    <location>
        <begin position="738"/>
        <end position="826"/>
    </location>
</feature>
<feature type="compositionally biased region" description="Polar residues" evidence="3">
    <location>
        <begin position="413"/>
        <end position="431"/>
    </location>
</feature>
<feature type="compositionally biased region" description="Low complexity" evidence="3">
    <location>
        <begin position="494"/>
        <end position="507"/>
    </location>
</feature>
<feature type="compositionally biased region" description="Low complexity" evidence="3">
    <location>
        <begin position="540"/>
        <end position="556"/>
    </location>
</feature>
<feature type="compositionally biased region" description="Basic and acidic residues" evidence="3">
    <location>
        <begin position="603"/>
        <end position="617"/>
    </location>
</feature>
<feature type="modified residue" description="Phosphoserine" evidence="2">
    <location>
        <position position="111"/>
    </location>
</feature>
<feature type="modified residue" description="Phosphoserine" evidence="2">
    <location>
        <position position="548"/>
    </location>
</feature>
<feature type="modified residue" description="Phosphothreonine" evidence="4">
    <location>
        <position position="554"/>
    </location>
</feature>
<feature type="modified residue" description="Phosphoserine" evidence="2">
    <location>
        <position position="556"/>
    </location>
</feature>
<feature type="modified residue" description="Phosphothreonine" evidence="2">
    <location>
        <position position="575"/>
    </location>
</feature>
<feature type="modified residue" description="Phosphoserine" evidence="2">
    <location>
        <position position="583"/>
    </location>
</feature>
<feature type="modified residue" description="Phosphoserine" evidence="2">
    <location>
        <position position="608"/>
    </location>
</feature>
<feature type="modified residue" description="Phosphoserine" evidence="2">
    <location>
        <position position="609"/>
    </location>
</feature>
<feature type="modified residue" description="Phosphoserine" evidence="2">
    <location>
        <position position="610"/>
    </location>
</feature>
<feature type="modified residue" description="Phosphoserine" evidence="2">
    <location>
        <position position="612"/>
    </location>
</feature>
<feature type="modified residue" description="Phosphoserine" evidence="2">
    <location>
        <position position="659"/>
    </location>
</feature>
<feature type="modified residue" description="Phosphoserine" evidence="2">
    <location>
        <position position="673"/>
    </location>
</feature>
<feature type="splice variant" id="VSP_025049" description="In isoform 4." evidence="10">
    <location>
        <begin position="1"/>
        <end position="652"/>
    </location>
</feature>
<feature type="splice variant" id="VSP_025050" description="In isoform 3." evidence="9">
    <location>
        <begin position="1"/>
        <end position="44"/>
    </location>
</feature>
<feature type="splice variant" id="VSP_025051" description="In isoform 3." evidence="9">
    <original>DFSTAFFNSIPLSSSLAGTMLSSPS</original>
    <variation>YSLLHQAFCGLVWGGLLFFCCQLAS</variation>
    <location>
        <begin position="473"/>
        <end position="497"/>
    </location>
</feature>
<feature type="splice variant" id="VSP_025052" description="In isoform 3." evidence="9">
    <location>
        <begin position="498"/>
        <end position="1015"/>
    </location>
</feature>
<feature type="splice variant" id="VSP_006773" description="In isoform Short." evidence="11">
    <original>SKIEPMK</original>
    <variation>PQYIICSP</variation>
    <location>
        <begin position="556"/>
        <end position="562"/>
    </location>
</feature>
<feature type="splice variant" id="VSP_006774" description="In isoform Short." evidence="11">
    <location>
        <begin position="563"/>
        <end position="1015"/>
    </location>
</feature>
<feature type="sequence conflict" description="In Ref. 1; CAA63334." evidence="12" ref="1">
    <original>F</original>
    <variation>C</variation>
    <location>
        <position position="216"/>
    </location>
</feature>
<feature type="sequence conflict" description="In Ref. 5; AAH52856." evidence="12" ref="5">
    <original>E</original>
    <variation>G</variation>
    <location>
        <position position="400"/>
    </location>
</feature>
<feature type="sequence conflict" description="In Ref. 1; CAA63334." evidence="12" ref="1">
    <original>R</original>
    <variation>S</variation>
    <location>
        <position position="459"/>
    </location>
</feature>
<feature type="sequence conflict" description="In Ref. 1; CAA63334." evidence="12" ref="1">
    <original>L</original>
    <variation>F</variation>
    <location>
        <position position="650"/>
    </location>
</feature>
<feature type="sequence conflict" description="In Ref. 2; CAA68049." evidence="12" ref="2">
    <original>G</original>
    <variation>R</variation>
    <location>
        <position position="712"/>
    </location>
</feature>
<feature type="sequence conflict" description="In Ref. 1; CAA63334." evidence="12" ref="1">
    <original>E</original>
    <variation>G</variation>
    <location>
        <position position="1007"/>
    </location>
</feature>
<feature type="sequence conflict" description="In Ref. 1; CAA63334." evidence="12" ref="1">
    <original>RD</original>
    <variation>WG</variation>
    <location>
        <begin position="1013"/>
        <end position="1014"/>
    </location>
</feature>
<protein>
    <recommendedName>
        <fullName>Protein HIRA</fullName>
    </recommendedName>
    <alternativeName>
        <fullName>TUP1-like enhancer of split protein 1</fullName>
    </alternativeName>
</protein>
<organism>
    <name type="scientific">Mus musculus</name>
    <name type="common">Mouse</name>
    <dbReference type="NCBI Taxonomy" id="10090"/>
    <lineage>
        <taxon>Eukaryota</taxon>
        <taxon>Metazoa</taxon>
        <taxon>Chordata</taxon>
        <taxon>Craniata</taxon>
        <taxon>Vertebrata</taxon>
        <taxon>Euteleostomi</taxon>
        <taxon>Mammalia</taxon>
        <taxon>Eutheria</taxon>
        <taxon>Euarchontoglires</taxon>
        <taxon>Glires</taxon>
        <taxon>Rodentia</taxon>
        <taxon>Myomorpha</taxon>
        <taxon>Muroidea</taxon>
        <taxon>Muridae</taxon>
        <taxon>Murinae</taxon>
        <taxon>Mus</taxon>
        <taxon>Mus</taxon>
    </lineage>
</organism>